<name>RS6_GLAP5</name>
<feature type="chain" id="PRO_1000133531" description="Small ribosomal subunit protein bS6">
    <location>
        <begin position="1"/>
        <end position="126"/>
    </location>
</feature>
<feature type="region of interest" description="Disordered" evidence="2">
    <location>
        <begin position="103"/>
        <end position="126"/>
    </location>
</feature>
<feature type="compositionally biased region" description="Acidic residues" evidence="2">
    <location>
        <begin position="115"/>
        <end position="126"/>
    </location>
</feature>
<sequence>MRHYEIVFMVHPDQSEQVPGMIERYTASVKEAGGQVHRLEDWGRRQLAYPINKLHKAHYVLMNVEAPQNVIDELETNFRYNDAVLRSLVLHTKAAVTEASPMLKAKDERKAPEALVEEVEAEDADE</sequence>
<dbReference type="EMBL" id="CP001321">
    <property type="protein sequence ID" value="ACL32689.1"/>
    <property type="molecule type" value="Genomic_DNA"/>
</dbReference>
<dbReference type="RefSeq" id="WP_005712013.1">
    <property type="nucleotide sequence ID" value="NC_011852.1"/>
</dbReference>
<dbReference type="SMR" id="B8F5T7"/>
<dbReference type="STRING" id="557723.HAPS_1071"/>
<dbReference type="GeneID" id="66618033"/>
<dbReference type="KEGG" id="hap:HAPS_1071"/>
<dbReference type="HOGENOM" id="CLU_113441_6_1_6"/>
<dbReference type="Proteomes" id="UP000006743">
    <property type="component" value="Chromosome"/>
</dbReference>
<dbReference type="GO" id="GO:0022627">
    <property type="term" value="C:cytosolic small ribosomal subunit"/>
    <property type="evidence" value="ECO:0007669"/>
    <property type="project" value="TreeGrafter"/>
</dbReference>
<dbReference type="GO" id="GO:0070181">
    <property type="term" value="F:small ribosomal subunit rRNA binding"/>
    <property type="evidence" value="ECO:0007669"/>
    <property type="project" value="TreeGrafter"/>
</dbReference>
<dbReference type="GO" id="GO:0003735">
    <property type="term" value="F:structural constituent of ribosome"/>
    <property type="evidence" value="ECO:0007669"/>
    <property type="project" value="InterPro"/>
</dbReference>
<dbReference type="GO" id="GO:0006412">
    <property type="term" value="P:translation"/>
    <property type="evidence" value="ECO:0007669"/>
    <property type="project" value="UniProtKB-UniRule"/>
</dbReference>
<dbReference type="CDD" id="cd00473">
    <property type="entry name" value="bS6"/>
    <property type="match status" value="1"/>
</dbReference>
<dbReference type="FunFam" id="3.30.70.60:FF:000003">
    <property type="entry name" value="30S ribosomal protein S6"/>
    <property type="match status" value="1"/>
</dbReference>
<dbReference type="Gene3D" id="3.30.70.60">
    <property type="match status" value="1"/>
</dbReference>
<dbReference type="HAMAP" id="MF_00360">
    <property type="entry name" value="Ribosomal_bS6"/>
    <property type="match status" value="1"/>
</dbReference>
<dbReference type="InterPro" id="IPR000529">
    <property type="entry name" value="Ribosomal_bS6"/>
</dbReference>
<dbReference type="InterPro" id="IPR020815">
    <property type="entry name" value="Ribosomal_bS6_CS"/>
</dbReference>
<dbReference type="InterPro" id="IPR035980">
    <property type="entry name" value="Ribosomal_bS6_sf"/>
</dbReference>
<dbReference type="InterPro" id="IPR020814">
    <property type="entry name" value="Ribosomal_S6_plastid/chlpt"/>
</dbReference>
<dbReference type="InterPro" id="IPR014717">
    <property type="entry name" value="Transl_elong_EF1B/ribsomal_bS6"/>
</dbReference>
<dbReference type="NCBIfam" id="TIGR00166">
    <property type="entry name" value="S6"/>
    <property type="match status" value="1"/>
</dbReference>
<dbReference type="PANTHER" id="PTHR21011">
    <property type="entry name" value="MITOCHONDRIAL 28S RIBOSOMAL PROTEIN S6"/>
    <property type="match status" value="1"/>
</dbReference>
<dbReference type="PANTHER" id="PTHR21011:SF1">
    <property type="entry name" value="SMALL RIBOSOMAL SUBUNIT PROTEIN BS6M"/>
    <property type="match status" value="1"/>
</dbReference>
<dbReference type="Pfam" id="PF01250">
    <property type="entry name" value="Ribosomal_S6"/>
    <property type="match status" value="1"/>
</dbReference>
<dbReference type="SUPFAM" id="SSF54995">
    <property type="entry name" value="Ribosomal protein S6"/>
    <property type="match status" value="1"/>
</dbReference>
<dbReference type="PROSITE" id="PS01048">
    <property type="entry name" value="RIBOSOMAL_S6"/>
    <property type="match status" value="1"/>
</dbReference>
<protein>
    <recommendedName>
        <fullName evidence="1">Small ribosomal subunit protein bS6</fullName>
    </recommendedName>
    <alternativeName>
        <fullName evidence="3">30S ribosomal protein S6</fullName>
    </alternativeName>
</protein>
<organism>
    <name type="scientific">Glaesserella parasuis serovar 5 (strain SH0165)</name>
    <name type="common">Haemophilus parasuis</name>
    <dbReference type="NCBI Taxonomy" id="557723"/>
    <lineage>
        <taxon>Bacteria</taxon>
        <taxon>Pseudomonadati</taxon>
        <taxon>Pseudomonadota</taxon>
        <taxon>Gammaproteobacteria</taxon>
        <taxon>Pasteurellales</taxon>
        <taxon>Pasteurellaceae</taxon>
        <taxon>Glaesserella</taxon>
    </lineage>
</organism>
<gene>
    <name evidence="1" type="primary">rpsF</name>
    <name type="ordered locus">HAPS_1071</name>
</gene>
<reference key="1">
    <citation type="journal article" date="2009" name="J. Bacteriol.">
        <title>Complete genome sequence of Haemophilus parasuis SH0165.</title>
        <authorList>
            <person name="Yue M."/>
            <person name="Yang F."/>
            <person name="Yang J."/>
            <person name="Bei W."/>
            <person name="Cai X."/>
            <person name="Chen L."/>
            <person name="Dong J."/>
            <person name="Zhou R."/>
            <person name="Jin M."/>
            <person name="Jin Q."/>
            <person name="Chen H."/>
        </authorList>
    </citation>
    <scope>NUCLEOTIDE SEQUENCE [LARGE SCALE GENOMIC DNA]</scope>
    <source>
        <strain>SH0165</strain>
    </source>
</reference>
<evidence type="ECO:0000255" key="1">
    <source>
        <dbReference type="HAMAP-Rule" id="MF_00360"/>
    </source>
</evidence>
<evidence type="ECO:0000256" key="2">
    <source>
        <dbReference type="SAM" id="MobiDB-lite"/>
    </source>
</evidence>
<evidence type="ECO:0000305" key="3"/>
<comment type="function">
    <text evidence="1">Binds together with bS18 to 16S ribosomal RNA.</text>
</comment>
<comment type="similarity">
    <text evidence="1">Belongs to the bacterial ribosomal protein bS6 family.</text>
</comment>
<proteinExistence type="inferred from homology"/>
<accession>B8F5T7</accession>
<keyword id="KW-1185">Reference proteome</keyword>
<keyword id="KW-0687">Ribonucleoprotein</keyword>
<keyword id="KW-0689">Ribosomal protein</keyword>
<keyword id="KW-0694">RNA-binding</keyword>
<keyword id="KW-0699">rRNA-binding</keyword>